<organism>
    <name type="scientific">Homo sapiens</name>
    <name type="common">Human</name>
    <dbReference type="NCBI Taxonomy" id="9606"/>
    <lineage>
        <taxon>Eukaryota</taxon>
        <taxon>Metazoa</taxon>
        <taxon>Chordata</taxon>
        <taxon>Craniata</taxon>
        <taxon>Vertebrata</taxon>
        <taxon>Euteleostomi</taxon>
        <taxon>Mammalia</taxon>
        <taxon>Eutheria</taxon>
        <taxon>Euarchontoglires</taxon>
        <taxon>Primates</taxon>
        <taxon>Haplorrhini</taxon>
        <taxon>Catarrhini</taxon>
        <taxon>Hominidae</taxon>
        <taxon>Homo</taxon>
    </lineage>
</organism>
<gene>
    <name type="primary">ARPC5</name>
    <name type="synonym">ARC16</name>
</gene>
<accession>O15511</accession>
<accession>A6NEC4</accession>
<accession>Q6PG42</accession>
<keyword id="KW-0002">3D-structure</keyword>
<keyword id="KW-0007">Acetylation</keyword>
<keyword id="KW-0009">Actin-binding</keyword>
<keyword id="KW-0025">Alternative splicing</keyword>
<keyword id="KW-0966">Cell projection</keyword>
<keyword id="KW-0963">Cytoplasm</keyword>
<keyword id="KW-0206">Cytoskeleton</keyword>
<keyword id="KW-0903">Direct protein sequencing</keyword>
<keyword id="KW-0225">Disease variant</keyword>
<keyword id="KW-0539">Nucleus</keyword>
<keyword id="KW-1267">Proteomics identification</keyword>
<keyword id="KW-1185">Reference proteome</keyword>
<keyword id="KW-0832">Ubl conjugation</keyword>
<sequence length="151" mass="16320">MSKNTVSSARFRKVDVDEYDENKFVDEEDGGDGQAGPDEGEVDSCLRQGNMTAALQAALKNPPINTKSQAVKDRAGSIVLKVLISFKANDIEKAVQSLDKNGVDLLMKYIYKGFESPSDNSSAMLLQWHEKALAAGGVGSIVRVLTARKTV</sequence>
<feature type="initiator methionine" description="Removed" evidence="3 11">
    <location>
        <position position="1"/>
    </location>
</feature>
<feature type="chain" id="PRO_0000124054" description="Actin-related protein 2/3 complex subunit 5">
    <location>
        <begin position="2"/>
        <end position="151"/>
    </location>
</feature>
<feature type="region of interest" description="Disordered" evidence="1">
    <location>
        <begin position="21"/>
        <end position="44"/>
    </location>
</feature>
<feature type="modified residue" description="N-acetylserine" evidence="11">
    <location>
        <position position="2"/>
    </location>
</feature>
<feature type="splice variant" id="VSP_024028" description="In isoform 2." evidence="9">
    <original>Q</original>
    <variation>HSIT</variation>
    <location>
        <position position="48"/>
    </location>
</feature>
<feature type="sequence variant" id="VAR_089098" description="In IMD113; likely pathogenic; loss of protein expression in patient cells." evidence="6">
    <location>
        <begin position="8"/>
        <end position="151"/>
    </location>
</feature>
<reference key="1">
    <citation type="journal article" date="1997" name="J. Cell Biol.">
        <title>The human Arp2/3 complex is composed of evolutionarily conserved subunits and is localized to cellular regions of dynamic actin filament assembly.</title>
        <authorList>
            <person name="Welch M.D."/>
            <person name="Depace A.H."/>
            <person name="Verma S."/>
            <person name="Iwamatsu A."/>
            <person name="Mitchison T.J."/>
        </authorList>
    </citation>
    <scope>NUCLEOTIDE SEQUENCE [MRNA] (ISOFORM 1)</scope>
    <scope>SUBCELLULAR LOCATION</scope>
    <scope>IDENTIFICATION IN THE ARP2/2 COMPLEX</scope>
</reference>
<reference key="2">
    <citation type="journal article" date="1997" name="Biochem. J.">
        <title>Mammalian actin-related protein 2/3 complex localizes to regions of lamellipodial protrusion and is composed of evolutionarily conserved proteins.</title>
        <authorList>
            <person name="Machesky L.M."/>
            <person name="Reeves E."/>
            <person name="Wientjes F."/>
            <person name="Mattheyse F.J."/>
            <person name="Grogan A."/>
            <person name="Totty N.F."/>
            <person name="Burlingame A.L."/>
            <person name="Hsuan J.J."/>
            <person name="Segal A.W."/>
        </authorList>
    </citation>
    <scope>NUCLEOTIDE SEQUENCE [MRNA] (ISOFORM 1)</scope>
    <scope>IDENTIFICATION IN THE ARP2/2 COMPLEX</scope>
</reference>
<reference key="3">
    <citation type="journal article" date="2006" name="Nature">
        <title>The DNA sequence and biological annotation of human chromosome 1.</title>
        <authorList>
            <person name="Gregory S.G."/>
            <person name="Barlow K.F."/>
            <person name="McLay K.E."/>
            <person name="Kaul R."/>
            <person name="Swarbreck D."/>
            <person name="Dunham A."/>
            <person name="Scott C.E."/>
            <person name="Howe K.L."/>
            <person name="Woodfine K."/>
            <person name="Spencer C.C.A."/>
            <person name="Jones M.C."/>
            <person name="Gillson C."/>
            <person name="Searle S."/>
            <person name="Zhou Y."/>
            <person name="Kokocinski F."/>
            <person name="McDonald L."/>
            <person name="Evans R."/>
            <person name="Phillips K."/>
            <person name="Atkinson A."/>
            <person name="Cooper R."/>
            <person name="Jones C."/>
            <person name="Hall R.E."/>
            <person name="Andrews T.D."/>
            <person name="Lloyd C."/>
            <person name="Ainscough R."/>
            <person name="Almeida J.P."/>
            <person name="Ambrose K.D."/>
            <person name="Anderson F."/>
            <person name="Andrew R.W."/>
            <person name="Ashwell R.I.S."/>
            <person name="Aubin K."/>
            <person name="Babbage A.K."/>
            <person name="Bagguley C.L."/>
            <person name="Bailey J."/>
            <person name="Beasley H."/>
            <person name="Bethel G."/>
            <person name="Bird C.P."/>
            <person name="Bray-Allen S."/>
            <person name="Brown J.Y."/>
            <person name="Brown A.J."/>
            <person name="Buckley D."/>
            <person name="Burton J."/>
            <person name="Bye J."/>
            <person name="Carder C."/>
            <person name="Chapman J.C."/>
            <person name="Clark S.Y."/>
            <person name="Clarke G."/>
            <person name="Clee C."/>
            <person name="Cobley V."/>
            <person name="Collier R.E."/>
            <person name="Corby N."/>
            <person name="Coville G.J."/>
            <person name="Davies J."/>
            <person name="Deadman R."/>
            <person name="Dunn M."/>
            <person name="Earthrowl M."/>
            <person name="Ellington A.G."/>
            <person name="Errington H."/>
            <person name="Frankish A."/>
            <person name="Frankland J."/>
            <person name="French L."/>
            <person name="Garner P."/>
            <person name="Garnett J."/>
            <person name="Gay L."/>
            <person name="Ghori M.R.J."/>
            <person name="Gibson R."/>
            <person name="Gilby L.M."/>
            <person name="Gillett W."/>
            <person name="Glithero R.J."/>
            <person name="Grafham D.V."/>
            <person name="Griffiths C."/>
            <person name="Griffiths-Jones S."/>
            <person name="Grocock R."/>
            <person name="Hammond S."/>
            <person name="Harrison E.S.I."/>
            <person name="Hart E."/>
            <person name="Haugen E."/>
            <person name="Heath P.D."/>
            <person name="Holmes S."/>
            <person name="Holt K."/>
            <person name="Howden P.J."/>
            <person name="Hunt A.R."/>
            <person name="Hunt S.E."/>
            <person name="Hunter G."/>
            <person name="Isherwood J."/>
            <person name="James R."/>
            <person name="Johnson C."/>
            <person name="Johnson D."/>
            <person name="Joy A."/>
            <person name="Kay M."/>
            <person name="Kershaw J.K."/>
            <person name="Kibukawa M."/>
            <person name="Kimberley A.M."/>
            <person name="King A."/>
            <person name="Knights A.J."/>
            <person name="Lad H."/>
            <person name="Laird G."/>
            <person name="Lawlor S."/>
            <person name="Leongamornlert D.A."/>
            <person name="Lloyd D.M."/>
            <person name="Loveland J."/>
            <person name="Lovell J."/>
            <person name="Lush M.J."/>
            <person name="Lyne R."/>
            <person name="Martin S."/>
            <person name="Mashreghi-Mohammadi M."/>
            <person name="Matthews L."/>
            <person name="Matthews N.S.W."/>
            <person name="McLaren S."/>
            <person name="Milne S."/>
            <person name="Mistry S."/>
            <person name="Moore M.J.F."/>
            <person name="Nickerson T."/>
            <person name="O'Dell C.N."/>
            <person name="Oliver K."/>
            <person name="Palmeiri A."/>
            <person name="Palmer S.A."/>
            <person name="Parker A."/>
            <person name="Patel D."/>
            <person name="Pearce A.V."/>
            <person name="Peck A.I."/>
            <person name="Pelan S."/>
            <person name="Phelps K."/>
            <person name="Phillimore B.J."/>
            <person name="Plumb R."/>
            <person name="Rajan J."/>
            <person name="Raymond C."/>
            <person name="Rouse G."/>
            <person name="Saenphimmachak C."/>
            <person name="Sehra H.K."/>
            <person name="Sheridan E."/>
            <person name="Shownkeen R."/>
            <person name="Sims S."/>
            <person name="Skuce C.D."/>
            <person name="Smith M."/>
            <person name="Steward C."/>
            <person name="Subramanian S."/>
            <person name="Sycamore N."/>
            <person name="Tracey A."/>
            <person name="Tromans A."/>
            <person name="Van Helmond Z."/>
            <person name="Wall M."/>
            <person name="Wallis J.M."/>
            <person name="White S."/>
            <person name="Whitehead S.L."/>
            <person name="Wilkinson J.E."/>
            <person name="Willey D.L."/>
            <person name="Williams H."/>
            <person name="Wilming L."/>
            <person name="Wray P.W."/>
            <person name="Wu Z."/>
            <person name="Coulson A."/>
            <person name="Vaudin M."/>
            <person name="Sulston J.E."/>
            <person name="Durbin R.M."/>
            <person name="Hubbard T."/>
            <person name="Wooster R."/>
            <person name="Dunham I."/>
            <person name="Carter N.P."/>
            <person name="McVean G."/>
            <person name="Ross M.T."/>
            <person name="Harrow J."/>
            <person name="Olson M.V."/>
            <person name="Beck S."/>
            <person name="Rogers J."/>
            <person name="Bentley D.R."/>
        </authorList>
    </citation>
    <scope>NUCLEOTIDE SEQUENCE [LARGE SCALE GENOMIC DNA]</scope>
</reference>
<reference key="4">
    <citation type="submission" date="2005-07" db="EMBL/GenBank/DDBJ databases">
        <authorList>
            <person name="Mural R.J."/>
            <person name="Istrail S."/>
            <person name="Sutton G.G."/>
            <person name="Florea L."/>
            <person name="Halpern A.L."/>
            <person name="Mobarry C.M."/>
            <person name="Lippert R."/>
            <person name="Walenz B."/>
            <person name="Shatkay H."/>
            <person name="Dew I."/>
            <person name="Miller J.R."/>
            <person name="Flanigan M.J."/>
            <person name="Edwards N.J."/>
            <person name="Bolanos R."/>
            <person name="Fasulo D."/>
            <person name="Halldorsson B.V."/>
            <person name="Hannenhalli S."/>
            <person name="Turner R."/>
            <person name="Yooseph S."/>
            <person name="Lu F."/>
            <person name="Nusskern D.R."/>
            <person name="Shue B.C."/>
            <person name="Zheng X.H."/>
            <person name="Zhong F."/>
            <person name="Delcher A.L."/>
            <person name="Huson D.H."/>
            <person name="Kravitz S.A."/>
            <person name="Mouchard L."/>
            <person name="Reinert K."/>
            <person name="Remington K.A."/>
            <person name="Clark A.G."/>
            <person name="Waterman M.S."/>
            <person name="Eichler E.E."/>
            <person name="Adams M.D."/>
            <person name="Hunkapiller M.W."/>
            <person name="Myers E.W."/>
            <person name="Venter J.C."/>
        </authorList>
    </citation>
    <scope>NUCLEOTIDE SEQUENCE [LARGE SCALE GENOMIC DNA]</scope>
</reference>
<reference key="5">
    <citation type="journal article" date="2004" name="Genome Res.">
        <title>The status, quality, and expansion of the NIH full-length cDNA project: the Mammalian Gene Collection (MGC).</title>
        <authorList>
            <consortium name="The MGC Project Team"/>
        </authorList>
    </citation>
    <scope>NUCLEOTIDE SEQUENCE [LARGE SCALE MRNA] (ISOFORM 2)</scope>
    <source>
        <tissue>Skin</tissue>
    </source>
</reference>
<reference key="6">
    <citation type="journal article" date="2003" name="Nat. Biotechnol.">
        <title>Exploring proteomes and analyzing protein processing by mass spectrometric identification of sorted N-terminal peptides.</title>
        <authorList>
            <person name="Gevaert K."/>
            <person name="Goethals M."/>
            <person name="Martens L."/>
            <person name="Van Damme J."/>
            <person name="Staes A."/>
            <person name="Thomas G.R."/>
            <person name="Vandekerckhove J."/>
        </authorList>
    </citation>
    <scope>PROTEIN SEQUENCE OF 2-10</scope>
    <source>
        <tissue>Platelet</tissue>
    </source>
</reference>
<reference key="7">
    <citation type="journal article" date="2001" name="Mol. Cell">
        <title>Reconstitution of human Arp2/3 complex reveals critical roles of individual subunits in complex structure and activity.</title>
        <authorList>
            <person name="Gournier H."/>
            <person name="Goley E.D."/>
            <person name="Niederstrasser H."/>
            <person name="Trinh T."/>
            <person name="Welch M.D."/>
        </authorList>
    </citation>
    <scope>RECONSTITUTION OF THE ARP2/3 COMPLEX</scope>
</reference>
<reference key="8">
    <citation type="journal article" date="2011" name="BMC Syst. Biol.">
        <title>Initial characterization of the human central proteome.</title>
        <authorList>
            <person name="Burkard T.R."/>
            <person name="Planyavsky M."/>
            <person name="Kaupe I."/>
            <person name="Breitwieser F.P."/>
            <person name="Buerckstuemmer T."/>
            <person name="Bennett K.L."/>
            <person name="Superti-Furga G."/>
            <person name="Colinge J."/>
        </authorList>
    </citation>
    <scope>IDENTIFICATION BY MASS SPECTROMETRY [LARGE SCALE ANALYSIS]</scope>
</reference>
<reference key="9">
    <citation type="journal article" date="2011" name="J. Biol. Chem.">
        <title>GRAIL (gene related to anergy in lymphocytes) regulates cytoskeletal reorganization through ubiquitination and degradation of Arp2/3 subunit 5 and coronin 1A.</title>
        <authorList>
            <person name="Ichikawa D."/>
            <person name="Mizuno M."/>
            <person name="Yamamura T."/>
            <person name="Miyake S."/>
        </authorList>
    </citation>
    <scope>UBIQUITINATION BY RNF128</scope>
</reference>
<reference key="10">
    <citation type="journal article" date="2012" name="Proc. Natl. Acad. Sci. U.S.A.">
        <title>N-terminal acetylome analyses and functional insights of the N-terminal acetyltransferase NatB.</title>
        <authorList>
            <person name="Van Damme P."/>
            <person name="Lasa M."/>
            <person name="Polevoda B."/>
            <person name="Gazquez C."/>
            <person name="Elosegui-Artola A."/>
            <person name="Kim D.S."/>
            <person name="De Juan-Pardo E."/>
            <person name="Demeyer K."/>
            <person name="Hole K."/>
            <person name="Larrea E."/>
            <person name="Timmerman E."/>
            <person name="Prieto J."/>
            <person name="Arnesen T."/>
            <person name="Sherman F."/>
            <person name="Gevaert K."/>
            <person name="Aldabe R."/>
        </authorList>
    </citation>
    <scope>ACETYLATION [LARGE SCALE ANALYSIS] AT SER-2</scope>
    <scope>CLEAVAGE OF INITIATOR METHIONINE [LARGE SCALE ANALYSIS]</scope>
    <scope>IDENTIFICATION BY MASS SPECTROMETRY [LARGE SCALE ANALYSIS]</scope>
</reference>
<reference key="11">
    <citation type="journal article" date="2014" name="J. Proteomics">
        <title>An enzyme assisted RP-RPLC approach for in-depth analysis of human liver phosphoproteome.</title>
        <authorList>
            <person name="Bian Y."/>
            <person name="Song C."/>
            <person name="Cheng K."/>
            <person name="Dong M."/>
            <person name="Wang F."/>
            <person name="Huang J."/>
            <person name="Sun D."/>
            <person name="Wang L."/>
            <person name="Ye M."/>
            <person name="Zou H."/>
        </authorList>
    </citation>
    <scope>IDENTIFICATION BY MASS SPECTROMETRY [LARGE SCALE ANALYSIS]</scope>
    <source>
        <tissue>Liver</tissue>
    </source>
</reference>
<reference key="12">
    <citation type="journal article" date="2015" name="Proteomics">
        <title>N-terminome analysis of the human mitochondrial proteome.</title>
        <authorList>
            <person name="Vaca Jacome A.S."/>
            <person name="Rabilloud T."/>
            <person name="Schaeffer-Reiss C."/>
            <person name="Rompais M."/>
            <person name="Ayoub D."/>
            <person name="Lane L."/>
            <person name="Bairoch A."/>
            <person name="Van Dorsselaer A."/>
            <person name="Carapito C."/>
        </authorList>
    </citation>
    <scope>IDENTIFICATION BY MASS SPECTROMETRY [LARGE SCALE ANALYSIS]</scope>
</reference>
<reference key="13">
    <citation type="journal article" date="2018" name="Nature">
        <title>Nuclear ARP2/3 drives DNA break clustering for homology-directed repair.</title>
        <authorList>
            <person name="Schrank B.R."/>
            <person name="Aparicio T."/>
            <person name="Li Y."/>
            <person name="Chang W."/>
            <person name="Chait B.T."/>
            <person name="Gundersen G.G."/>
            <person name="Gottesman M.E."/>
            <person name="Gautier J."/>
        </authorList>
    </citation>
    <scope>FUNCTION</scope>
    <scope>SUBCELLULAR LOCATION</scope>
</reference>
<reference key="14">
    <citation type="journal article" date="2023" name="Nat. Commun.">
        <title>Inherited ARPC5 mutations cause an actinopathy impairing cell motility and disrupting cytokine signaling.</title>
        <authorList>
            <person name="Nunes-Santos C.J."/>
            <person name="Kuehn H."/>
            <person name="Boast B."/>
            <person name="Hwang S."/>
            <person name="Kuhns D.B."/>
            <person name="Stoddard J."/>
            <person name="Niemela J.E."/>
            <person name="Fink D.L."/>
            <person name="Pittaluga S."/>
            <person name="Abu-Asab M."/>
            <person name="Davies J.S."/>
            <person name="Barr V.A."/>
            <person name="Kawai T."/>
            <person name="Delmonte O.M."/>
            <person name="Bosticardo M."/>
            <person name="Garofalo M."/>
            <person name="Carneiro-Sampaio M."/>
            <person name="Somech R."/>
            <person name="Gharagozlou M."/>
            <person name="Parvaneh N."/>
            <person name="Samelson L.E."/>
            <person name="Fleisher T.A."/>
            <person name="Puel A."/>
            <person name="Notarangelo L.D."/>
            <person name="Boisson B."/>
            <person name="Casanova J.L."/>
            <person name="Derfalvi B."/>
            <person name="Rosenzweig S.D."/>
        </authorList>
    </citation>
    <scope>INVOLVEMENT IN IMD113</scope>
    <scope>VARIANT IMD113 8-SER--VAL-151 DEL</scope>
    <scope>SUBCELLULAR LOCATION</scope>
</reference>
<name>ARPC5_HUMAN</name>
<proteinExistence type="evidence at protein level"/>
<dbReference type="EMBL" id="AF006088">
    <property type="protein sequence ID" value="AAB64193.1"/>
    <property type="molecule type" value="mRNA"/>
</dbReference>
<dbReference type="EMBL" id="AF017807">
    <property type="protein sequence ID" value="AAB70561.1"/>
    <property type="molecule type" value="mRNA"/>
</dbReference>
<dbReference type="EMBL" id="AL137800">
    <property type="status" value="NOT_ANNOTATED_CDS"/>
    <property type="molecule type" value="Genomic_DNA"/>
</dbReference>
<dbReference type="EMBL" id="CH471067">
    <property type="protein sequence ID" value="EAW91163.1"/>
    <property type="molecule type" value="Genomic_DNA"/>
</dbReference>
<dbReference type="EMBL" id="BC057237">
    <property type="protein sequence ID" value="AAH57237.1"/>
    <property type="molecule type" value="mRNA"/>
</dbReference>
<dbReference type="CCDS" id="CCDS1357.1">
    <molecule id="O15511-1"/>
</dbReference>
<dbReference type="CCDS" id="CCDS58050.1">
    <molecule id="O15511-2"/>
</dbReference>
<dbReference type="RefSeq" id="NP_001257368.1">
    <molecule id="O15511-2"/>
    <property type="nucleotide sequence ID" value="NM_001270439.2"/>
</dbReference>
<dbReference type="RefSeq" id="NP_005708.1">
    <molecule id="O15511-1"/>
    <property type="nucleotide sequence ID" value="NM_005717.4"/>
</dbReference>
<dbReference type="PDB" id="6UHC">
    <property type="method" value="EM"/>
    <property type="resolution" value="3.90 A"/>
    <property type="chains" value="G=1-151"/>
</dbReference>
<dbReference type="PDB" id="6YW7">
    <property type="method" value="EM"/>
    <property type="resolution" value="4.50 A"/>
    <property type="chains" value="G=1-151"/>
</dbReference>
<dbReference type="PDBsum" id="6UHC"/>
<dbReference type="PDBsum" id="6YW7"/>
<dbReference type="EMDB" id="EMD-10960"/>
<dbReference type="EMDB" id="EMD-20770"/>
<dbReference type="SMR" id="O15511"/>
<dbReference type="BioGRID" id="115399">
    <property type="interactions" value="114"/>
</dbReference>
<dbReference type="ComplexPortal" id="CPX-2490">
    <property type="entry name" value="Actin-related protein 2/3 complex, ARPC1A-ACTR3B-ARPC5 variant"/>
</dbReference>
<dbReference type="ComplexPortal" id="CPX-2579">
    <property type="entry name" value="Actin-related protein 2/3 complex, ARPC1B-ACTR3-ARPC5 variant"/>
</dbReference>
<dbReference type="ComplexPortal" id="CPX-2583">
    <property type="entry name" value="Actin-related protein 2/3 complex, ARPC1B-ACTR3B-ARPC5 variant"/>
</dbReference>
<dbReference type="ComplexPortal" id="CPX-2586">
    <property type="entry name" value="Actin-related protein 2/3 complex, ARPC1A-ACTR3-ARPC5 variant"/>
</dbReference>
<dbReference type="CORUM" id="O15511"/>
<dbReference type="DIP" id="DIP-33144N"/>
<dbReference type="FunCoup" id="O15511">
    <property type="interactions" value="2169"/>
</dbReference>
<dbReference type="IntAct" id="O15511">
    <property type="interactions" value="68"/>
</dbReference>
<dbReference type="MINT" id="O15511"/>
<dbReference type="STRING" id="9606.ENSP00000294742"/>
<dbReference type="ChEMBL" id="CHEMBL4295658"/>
<dbReference type="DrugBank" id="DB08236">
    <property type="generic name" value="(2S)-2-(3-bromophenyl)-3-(5-chloro-2-hydroxyphenyl)-1,3-thiazolidin-4-one"/>
</dbReference>
<dbReference type="DrugBank" id="DB08235">
    <property type="generic name" value="N-[2-(2-methyl-1H-indol-3-yl)ethyl]thiophene-2-carboxamide"/>
</dbReference>
<dbReference type="GlyGen" id="O15511">
    <property type="glycosylation" value="4 sites, 1 O-linked glycan (4 sites)"/>
</dbReference>
<dbReference type="iPTMnet" id="O15511"/>
<dbReference type="MetOSite" id="O15511"/>
<dbReference type="PhosphoSitePlus" id="O15511"/>
<dbReference type="BioMuta" id="ARPC5"/>
<dbReference type="OGP" id="O15511"/>
<dbReference type="jPOST" id="O15511"/>
<dbReference type="MassIVE" id="O15511"/>
<dbReference type="PaxDb" id="9606-ENSP00000294742"/>
<dbReference type="PeptideAtlas" id="O15511"/>
<dbReference type="ProteomicsDB" id="48703">
    <molecule id="O15511-1"/>
</dbReference>
<dbReference type="ProteomicsDB" id="48704">
    <molecule id="O15511-2"/>
</dbReference>
<dbReference type="Pumba" id="O15511"/>
<dbReference type="TopDownProteomics" id="O15511-1">
    <molecule id="O15511-1"/>
</dbReference>
<dbReference type="TopDownProteomics" id="O15511-2">
    <molecule id="O15511-2"/>
</dbReference>
<dbReference type="Antibodypedia" id="34448">
    <property type="antibodies" value="190 antibodies from 30 providers"/>
</dbReference>
<dbReference type="DNASU" id="10092"/>
<dbReference type="Ensembl" id="ENST00000294742.6">
    <molecule id="O15511-2"/>
    <property type="protein sequence ID" value="ENSP00000294742.6"/>
    <property type="gene ID" value="ENSG00000162704.16"/>
</dbReference>
<dbReference type="Ensembl" id="ENST00000359856.11">
    <molecule id="O15511-1"/>
    <property type="protein sequence ID" value="ENSP00000352918.6"/>
    <property type="gene ID" value="ENSG00000162704.16"/>
</dbReference>
<dbReference type="GeneID" id="10092"/>
<dbReference type="KEGG" id="hsa:10092"/>
<dbReference type="MANE-Select" id="ENST00000359856.11">
    <property type="protein sequence ID" value="ENSP00000352918.6"/>
    <property type="RefSeq nucleotide sequence ID" value="NM_005717.4"/>
    <property type="RefSeq protein sequence ID" value="NP_005708.1"/>
</dbReference>
<dbReference type="UCSC" id="uc021pgb.3">
    <molecule id="O15511-1"/>
    <property type="organism name" value="human"/>
</dbReference>
<dbReference type="AGR" id="HGNC:708"/>
<dbReference type="CTD" id="10092"/>
<dbReference type="DisGeNET" id="10092"/>
<dbReference type="GeneCards" id="ARPC5"/>
<dbReference type="HGNC" id="HGNC:708">
    <property type="gene designation" value="ARPC5"/>
</dbReference>
<dbReference type="HPA" id="ENSG00000162704">
    <property type="expression patterns" value="Low tissue specificity"/>
</dbReference>
<dbReference type="MalaCards" id="ARPC5"/>
<dbReference type="MIM" id="604227">
    <property type="type" value="gene"/>
</dbReference>
<dbReference type="MIM" id="620565">
    <property type="type" value="phenotype"/>
</dbReference>
<dbReference type="neXtProt" id="NX_O15511"/>
<dbReference type="OpenTargets" id="ENSG00000162704"/>
<dbReference type="PharmGKB" id="PA25003"/>
<dbReference type="VEuPathDB" id="HostDB:ENSG00000162704"/>
<dbReference type="eggNOG" id="KOG3380">
    <property type="taxonomic scope" value="Eukaryota"/>
</dbReference>
<dbReference type="GeneTree" id="ENSGT00940000154654"/>
<dbReference type="HOGENOM" id="CLU_101888_1_1_1"/>
<dbReference type="InParanoid" id="O15511"/>
<dbReference type="OMA" id="GMGCIMR"/>
<dbReference type="OrthoDB" id="429520at2759"/>
<dbReference type="PAN-GO" id="O15511">
    <property type="GO annotations" value="4 GO annotations based on evolutionary models"/>
</dbReference>
<dbReference type="PhylomeDB" id="O15511"/>
<dbReference type="TreeFam" id="TF319716"/>
<dbReference type="PathwayCommons" id="O15511"/>
<dbReference type="Reactome" id="R-HSA-2029482">
    <property type="pathway name" value="Regulation of actin dynamics for phagocytic cup formation"/>
</dbReference>
<dbReference type="Reactome" id="R-HSA-3928662">
    <property type="pathway name" value="EPHB-mediated forward signaling"/>
</dbReference>
<dbReference type="Reactome" id="R-HSA-5663213">
    <property type="pathway name" value="RHO GTPases Activate WASPs and WAVEs"/>
</dbReference>
<dbReference type="Reactome" id="R-HSA-6798695">
    <property type="pathway name" value="Neutrophil degranulation"/>
</dbReference>
<dbReference type="Reactome" id="R-HSA-8856828">
    <property type="pathway name" value="Clathrin-mediated endocytosis"/>
</dbReference>
<dbReference type="Reactome" id="R-HSA-9664422">
    <property type="pathway name" value="FCGR3A-mediated phagocytosis"/>
</dbReference>
<dbReference type="SignaLink" id="O15511"/>
<dbReference type="SIGNOR" id="O15511"/>
<dbReference type="BioGRID-ORCS" id="10092">
    <property type="hits" value="21 hits in 1165 CRISPR screens"/>
</dbReference>
<dbReference type="ChiTaRS" id="ARPC5">
    <property type="organism name" value="human"/>
</dbReference>
<dbReference type="GeneWiki" id="ARPC5"/>
<dbReference type="GenomeRNAi" id="10092"/>
<dbReference type="Pharos" id="O15511">
    <property type="development level" value="Tbio"/>
</dbReference>
<dbReference type="PRO" id="PR:O15511"/>
<dbReference type="Proteomes" id="UP000005640">
    <property type="component" value="Chromosome 1"/>
</dbReference>
<dbReference type="RNAct" id="O15511">
    <property type="molecule type" value="protein"/>
</dbReference>
<dbReference type="Bgee" id="ENSG00000162704">
    <property type="expression patterns" value="Expressed in monocyte and 207 other cell types or tissues"/>
</dbReference>
<dbReference type="ExpressionAtlas" id="O15511">
    <property type="expression patterns" value="baseline and differential"/>
</dbReference>
<dbReference type="GO" id="GO:0015629">
    <property type="term" value="C:actin cytoskeleton"/>
    <property type="evidence" value="ECO:0000304"/>
    <property type="project" value="ProtInc"/>
</dbReference>
<dbReference type="GO" id="GO:0005885">
    <property type="term" value="C:Arp2/3 protein complex"/>
    <property type="evidence" value="ECO:0000314"/>
    <property type="project" value="FlyBase"/>
</dbReference>
<dbReference type="GO" id="GO:0005737">
    <property type="term" value="C:cytoplasm"/>
    <property type="evidence" value="ECO:0000318"/>
    <property type="project" value="GO_Central"/>
</dbReference>
<dbReference type="GO" id="GO:0005829">
    <property type="term" value="C:cytosol"/>
    <property type="evidence" value="ECO:0000304"/>
    <property type="project" value="Reactome"/>
</dbReference>
<dbReference type="GO" id="GO:0070062">
    <property type="term" value="C:extracellular exosome"/>
    <property type="evidence" value="ECO:0007005"/>
    <property type="project" value="UniProtKB"/>
</dbReference>
<dbReference type="GO" id="GO:0005576">
    <property type="term" value="C:extracellular region"/>
    <property type="evidence" value="ECO:0000304"/>
    <property type="project" value="Reactome"/>
</dbReference>
<dbReference type="GO" id="GO:1904813">
    <property type="term" value="C:ficolin-1-rich granule lumen"/>
    <property type="evidence" value="ECO:0000304"/>
    <property type="project" value="Reactome"/>
</dbReference>
<dbReference type="GO" id="GO:0005925">
    <property type="term" value="C:focal adhesion"/>
    <property type="evidence" value="ECO:0007005"/>
    <property type="project" value="UniProtKB"/>
</dbReference>
<dbReference type="GO" id="GO:0030027">
    <property type="term" value="C:lamellipodium"/>
    <property type="evidence" value="ECO:0007669"/>
    <property type="project" value="Ensembl"/>
</dbReference>
<dbReference type="GO" id="GO:0005634">
    <property type="term" value="C:nucleus"/>
    <property type="evidence" value="ECO:0000315"/>
    <property type="project" value="UniProtKB"/>
</dbReference>
<dbReference type="GO" id="GO:0034774">
    <property type="term" value="C:secretory granule lumen"/>
    <property type="evidence" value="ECO:0000304"/>
    <property type="project" value="Reactome"/>
</dbReference>
<dbReference type="GO" id="GO:0035861">
    <property type="term" value="C:site of double-strand break"/>
    <property type="evidence" value="ECO:0000250"/>
    <property type="project" value="UniProtKB"/>
</dbReference>
<dbReference type="GO" id="GO:0003779">
    <property type="term" value="F:actin binding"/>
    <property type="evidence" value="ECO:0007669"/>
    <property type="project" value="UniProtKB-KW"/>
</dbReference>
<dbReference type="GO" id="GO:0005200">
    <property type="term" value="F:structural constituent of cytoskeleton"/>
    <property type="evidence" value="ECO:0000314"/>
    <property type="project" value="FlyBase"/>
</dbReference>
<dbReference type="GO" id="GO:0030036">
    <property type="term" value="P:actin cytoskeleton organization"/>
    <property type="evidence" value="ECO:0000304"/>
    <property type="project" value="ProtInc"/>
</dbReference>
<dbReference type="GO" id="GO:0034314">
    <property type="term" value="P:Arp2/3 complex-mediated actin nucleation"/>
    <property type="evidence" value="ECO:0000314"/>
    <property type="project" value="FlyBase"/>
</dbReference>
<dbReference type="GO" id="GO:0016477">
    <property type="term" value="P:cell migration"/>
    <property type="evidence" value="ECO:0000315"/>
    <property type="project" value="CACAO"/>
</dbReference>
<dbReference type="GO" id="GO:0030833">
    <property type="term" value="P:regulation of actin filament polymerization"/>
    <property type="evidence" value="ECO:0007669"/>
    <property type="project" value="InterPro"/>
</dbReference>
<dbReference type="FunFam" id="1.25.40.190:FF:000001">
    <property type="entry name" value="Actin-related protein 2/3 complex subunit 5"/>
    <property type="match status" value="1"/>
</dbReference>
<dbReference type="Gene3D" id="1.25.40.190">
    <property type="entry name" value="Actin-related protein 2/3 complex subunit 5"/>
    <property type="match status" value="1"/>
</dbReference>
<dbReference type="InterPro" id="IPR006789">
    <property type="entry name" value="ARPC5"/>
</dbReference>
<dbReference type="InterPro" id="IPR036743">
    <property type="entry name" value="ARPC5_sf"/>
</dbReference>
<dbReference type="PANTHER" id="PTHR12644">
    <property type="entry name" value="ARP2/3 COMPLEX 16 KD SUBUNIT P16-ARC"/>
    <property type="match status" value="1"/>
</dbReference>
<dbReference type="Pfam" id="PF04699">
    <property type="entry name" value="P16-Arc"/>
    <property type="match status" value="1"/>
</dbReference>
<dbReference type="PIRSF" id="PIRSF039096">
    <property type="entry name" value="p16-ARC"/>
    <property type="match status" value="1"/>
</dbReference>
<dbReference type="SUPFAM" id="SSF69103">
    <property type="entry name" value="Arp2/3 complex 16 kDa subunit ARPC5"/>
    <property type="match status" value="1"/>
</dbReference>
<protein>
    <recommendedName>
        <fullName>Actin-related protein 2/3 complex subunit 5</fullName>
    </recommendedName>
    <alternativeName>
        <fullName>Arp2/3 complex 16 kDa subunit</fullName>
        <shortName>p16-ARC</shortName>
    </alternativeName>
</protein>
<evidence type="ECO:0000256" key="1">
    <source>
        <dbReference type="SAM" id="MobiDB-lite"/>
    </source>
</evidence>
<evidence type="ECO:0000269" key="2">
    <source>
    </source>
</evidence>
<evidence type="ECO:0000269" key="3">
    <source>
    </source>
</evidence>
<evidence type="ECO:0000269" key="4">
    <source>
    </source>
</evidence>
<evidence type="ECO:0000269" key="5">
    <source>
    </source>
</evidence>
<evidence type="ECO:0000269" key="6">
    <source>
    </source>
</evidence>
<evidence type="ECO:0000269" key="7">
    <source>
    </source>
</evidence>
<evidence type="ECO:0000269" key="8">
    <source>
    </source>
</evidence>
<evidence type="ECO:0000303" key="9">
    <source>
    </source>
</evidence>
<evidence type="ECO:0000305" key="10"/>
<evidence type="ECO:0007744" key="11">
    <source>
    </source>
</evidence>
<comment type="function">
    <text evidence="5 7">Component of the Arp2/3 complex, a multiprotein complex that mediates actin polymerization upon stimulation by nucleation-promoting factor (NPF) (PubMed:9230079). The Arp2/3 complex mediates the formation of branched actin networks in the cytoplasm, providing the force for cell motility (PubMed:9230079). In addition to its role in the cytoplasmic cytoskeleton, the Arp2/3 complex also promotes actin polymerization in the nucleus, thereby regulating gene transcription and repair of damaged DNA (PubMed:29925947). The Arp2/3 complex promotes homologous recombination (HR) repair in response to DNA damage by promoting nuclear actin polymerization, leading to drive motility of double-strand breaks (DSBs) (PubMed:29925947).</text>
</comment>
<comment type="subunit">
    <text evidence="2 7 8">Component of the Arp2/3 complex composed of ACTR2/ARP2, ACTR3/ARP3, ARPC1B/p41-ARC, ARPC2/p34-ARC, ARPC3/p21-ARC, ARPC4/p20-ARC and ARPC5/p16-ARC.</text>
</comment>
<comment type="subcellular location">
    <subcellularLocation>
        <location evidence="7">Cytoplasm</location>
        <location evidence="7">Cytoskeleton</location>
    </subcellularLocation>
    <subcellularLocation>
        <location evidence="7">Cell projection</location>
    </subcellularLocation>
    <subcellularLocation>
        <location evidence="5 6">Nucleus</location>
    </subcellularLocation>
</comment>
<comment type="alternative products">
    <event type="alternative splicing"/>
    <isoform>
        <id>O15511-1</id>
        <name>1</name>
        <sequence type="displayed"/>
    </isoform>
    <isoform>
        <id>O15511-2</id>
        <name>2</name>
        <sequence type="described" ref="VSP_024028"/>
    </isoform>
</comment>
<comment type="PTM">
    <text evidence="4">Polyubiquitinated by RNF128 with 'Lys-63'-linked chains, leading to proteasomal degradation.</text>
</comment>
<comment type="disease" evidence="6">
    <disease id="DI-06786">
        <name>Immunodeficiency 113 with autoimmunity and autoinflammation</name>
        <acronym>IMD113</acronym>
        <description>An autosomal recessive immunologic disorder characterized by recurrent and severe infections, early-onset autoimmunity, inflammation, and facial dysmorphism. Features of autoimmunity and autoinflammation include hemolytic anemia, thrombocytopenia, hepatosplenomegaly, leukocytosis, neutrophilia, and elevated acute phase reactants.</description>
        <dbReference type="MIM" id="620565"/>
    </disease>
    <text>The disease is caused by variants affecting the gene represented in this entry.</text>
</comment>
<comment type="similarity">
    <text evidence="10">Belongs to the ARPC5 family.</text>
</comment>